<comment type="function">
    <text evidence="1">Functions in the biosynthesis of branched-chain amino acids. Catalyzes the dehydration of (2R,3R)-2,3-dihydroxy-3-methylpentanoate (2,3-dihydroxy-3-methylvalerate) into 2-oxo-3-methylpentanoate (2-oxo-3-methylvalerate) and of (2R)-2,3-dihydroxy-3-methylbutanoate (2,3-dihydroxyisovalerate) into 2-oxo-3-methylbutanoate (2-oxoisovalerate), the penultimate precursor to L-isoleucine and L-valine, respectively.</text>
</comment>
<comment type="catalytic activity">
    <reaction evidence="1">
        <text>(2R)-2,3-dihydroxy-3-methylbutanoate = 3-methyl-2-oxobutanoate + H2O</text>
        <dbReference type="Rhea" id="RHEA:24809"/>
        <dbReference type="ChEBI" id="CHEBI:11851"/>
        <dbReference type="ChEBI" id="CHEBI:15377"/>
        <dbReference type="ChEBI" id="CHEBI:49072"/>
        <dbReference type="EC" id="4.2.1.9"/>
    </reaction>
    <physiologicalReaction direction="left-to-right" evidence="1">
        <dbReference type="Rhea" id="RHEA:24810"/>
    </physiologicalReaction>
</comment>
<comment type="catalytic activity">
    <reaction evidence="1">
        <text>(2R,3R)-2,3-dihydroxy-3-methylpentanoate = (S)-3-methyl-2-oxopentanoate + H2O</text>
        <dbReference type="Rhea" id="RHEA:27694"/>
        <dbReference type="ChEBI" id="CHEBI:15377"/>
        <dbReference type="ChEBI" id="CHEBI:35146"/>
        <dbReference type="ChEBI" id="CHEBI:49258"/>
        <dbReference type="EC" id="4.2.1.9"/>
    </reaction>
    <physiologicalReaction direction="left-to-right" evidence="1">
        <dbReference type="Rhea" id="RHEA:27695"/>
    </physiologicalReaction>
</comment>
<comment type="cofactor">
    <cofactor evidence="1">
        <name>[2Fe-2S] cluster</name>
        <dbReference type="ChEBI" id="CHEBI:190135"/>
    </cofactor>
    <text evidence="1">Binds 1 [2Fe-2S] cluster per subunit. This cluster acts as a Lewis acid cofactor.</text>
</comment>
<comment type="cofactor">
    <cofactor evidence="1">
        <name>Mg(2+)</name>
        <dbReference type="ChEBI" id="CHEBI:18420"/>
    </cofactor>
</comment>
<comment type="pathway">
    <text evidence="1">Amino-acid biosynthesis; L-isoleucine biosynthesis; L-isoleucine from 2-oxobutanoate: step 3/4.</text>
</comment>
<comment type="pathway">
    <text evidence="1">Amino-acid biosynthesis; L-valine biosynthesis; L-valine from pyruvate: step 3/4.</text>
</comment>
<comment type="subunit">
    <text evidence="1">Homodimer.</text>
</comment>
<comment type="similarity">
    <text evidence="1">Belongs to the IlvD/Edd family.</text>
</comment>
<name>ILVD_DEHM1</name>
<proteinExistence type="inferred from homology"/>
<organism>
    <name type="scientific">Dehalococcoides mccartyi (strain ATCC BAA-2266 / KCTC 15142 / 195)</name>
    <name type="common">Dehalococcoides ethenogenes (strain 195)</name>
    <dbReference type="NCBI Taxonomy" id="243164"/>
    <lineage>
        <taxon>Bacteria</taxon>
        <taxon>Bacillati</taxon>
        <taxon>Chloroflexota</taxon>
        <taxon>Dehalococcoidia</taxon>
        <taxon>Dehalococcoidales</taxon>
        <taxon>Dehalococcoidaceae</taxon>
        <taxon>Dehalococcoides</taxon>
    </lineage>
</organism>
<accession>Q3Z888</accession>
<sequence length="555" mass="58960">MKSEDVKLGIERAPHRSLLRALGLNTESFQKPFIGIVNSFTEVVPGHIHLRRISEAVKEGINAAGGVGFEFNTIAVCDGIAMNHAGMKYSLPSREIIANTVEIMAMAHAFDGLVFIPNCDKVVPGMLMAACRLNIPSIFVSGGPMLAGRLRKNDQVSCVDLNSVFEAVGQVAKGQMTEEELLELEKVACPGCGSCAGMFTANTMNCLTEALGMALPGNGTIPAVDSRRTQLAKDTGRQILKLIKDNTCPKDIITPDAIYNAFSLDVALGGSTNSVLHVMAVAHEAGADFSLEEINRVSDTTPNLCKLRPSGPYHIENLDQAGGIGSVLKELKPWLKNDARTVSGKTIGQMADAAPKADNKVIRFASNPYSPKGGLAILFGNLAPSGSVVKRSAVAPEMMVHRGPARIFDSEELATKAIMGGKIIPGDVLVIRYEGPKGGPGMREMLTPTSLLAGMGLDKEVALITDGRFSGATRGAAMGHVSPEAAARGPIAALQDGDMINIDIHNYKLSVELSDEEIQKRLANVPAFKPKITSGYLKYYTENVTSASTGAVFKD</sequence>
<keyword id="KW-0001">2Fe-2S</keyword>
<keyword id="KW-0028">Amino-acid biosynthesis</keyword>
<keyword id="KW-0100">Branched-chain amino acid biosynthesis</keyword>
<keyword id="KW-0408">Iron</keyword>
<keyword id="KW-0411">Iron-sulfur</keyword>
<keyword id="KW-0456">Lyase</keyword>
<keyword id="KW-0460">Magnesium</keyword>
<keyword id="KW-0479">Metal-binding</keyword>
<gene>
    <name evidence="1" type="primary">ilvD</name>
    <name type="ordered locus">DET0834</name>
</gene>
<dbReference type="EC" id="4.2.1.9" evidence="1"/>
<dbReference type="EMBL" id="CP000027">
    <property type="protein sequence ID" value="AAW39923.1"/>
    <property type="molecule type" value="Genomic_DNA"/>
</dbReference>
<dbReference type="RefSeq" id="WP_010936562.1">
    <property type="nucleotide sequence ID" value="NC_002936.3"/>
</dbReference>
<dbReference type="SMR" id="Q3Z888"/>
<dbReference type="FunCoup" id="Q3Z888">
    <property type="interactions" value="333"/>
</dbReference>
<dbReference type="STRING" id="243164.DET0834"/>
<dbReference type="GeneID" id="3229885"/>
<dbReference type="KEGG" id="det:DET0834"/>
<dbReference type="PATRIC" id="fig|243164.10.peg.792"/>
<dbReference type="eggNOG" id="COG0129">
    <property type="taxonomic scope" value="Bacteria"/>
</dbReference>
<dbReference type="HOGENOM" id="CLU_014271_4_2_0"/>
<dbReference type="InParanoid" id="Q3Z888"/>
<dbReference type="UniPathway" id="UPA00047">
    <property type="reaction ID" value="UER00057"/>
</dbReference>
<dbReference type="UniPathway" id="UPA00049">
    <property type="reaction ID" value="UER00061"/>
</dbReference>
<dbReference type="Proteomes" id="UP000008289">
    <property type="component" value="Chromosome"/>
</dbReference>
<dbReference type="GO" id="GO:0005829">
    <property type="term" value="C:cytosol"/>
    <property type="evidence" value="ECO:0007669"/>
    <property type="project" value="TreeGrafter"/>
</dbReference>
<dbReference type="GO" id="GO:0051537">
    <property type="term" value="F:2 iron, 2 sulfur cluster binding"/>
    <property type="evidence" value="ECO:0007669"/>
    <property type="project" value="UniProtKB-UniRule"/>
</dbReference>
<dbReference type="GO" id="GO:0004160">
    <property type="term" value="F:dihydroxy-acid dehydratase activity"/>
    <property type="evidence" value="ECO:0007669"/>
    <property type="project" value="UniProtKB-UniRule"/>
</dbReference>
<dbReference type="GO" id="GO:0000287">
    <property type="term" value="F:magnesium ion binding"/>
    <property type="evidence" value="ECO:0007669"/>
    <property type="project" value="UniProtKB-UniRule"/>
</dbReference>
<dbReference type="GO" id="GO:0009097">
    <property type="term" value="P:isoleucine biosynthetic process"/>
    <property type="evidence" value="ECO:0007669"/>
    <property type="project" value="UniProtKB-UniRule"/>
</dbReference>
<dbReference type="GO" id="GO:0009099">
    <property type="term" value="P:L-valine biosynthetic process"/>
    <property type="evidence" value="ECO:0007669"/>
    <property type="project" value="UniProtKB-UniRule"/>
</dbReference>
<dbReference type="FunFam" id="3.50.30.80:FF:000001">
    <property type="entry name" value="Dihydroxy-acid dehydratase"/>
    <property type="match status" value="1"/>
</dbReference>
<dbReference type="Gene3D" id="3.50.30.80">
    <property type="entry name" value="IlvD/EDD C-terminal domain-like"/>
    <property type="match status" value="1"/>
</dbReference>
<dbReference type="HAMAP" id="MF_00012">
    <property type="entry name" value="IlvD"/>
    <property type="match status" value="1"/>
</dbReference>
<dbReference type="InterPro" id="IPR042096">
    <property type="entry name" value="Dihydro-acid_dehy_C"/>
</dbReference>
<dbReference type="InterPro" id="IPR004404">
    <property type="entry name" value="DihydroxyA_deHydtase"/>
</dbReference>
<dbReference type="InterPro" id="IPR020558">
    <property type="entry name" value="DiOHA_6PGluconate_deHydtase_CS"/>
</dbReference>
<dbReference type="InterPro" id="IPR056740">
    <property type="entry name" value="ILV_EDD_C"/>
</dbReference>
<dbReference type="InterPro" id="IPR000581">
    <property type="entry name" value="ILV_EDD_N"/>
</dbReference>
<dbReference type="InterPro" id="IPR037237">
    <property type="entry name" value="IlvD/EDD_N"/>
</dbReference>
<dbReference type="NCBIfam" id="TIGR00110">
    <property type="entry name" value="ilvD"/>
    <property type="match status" value="1"/>
</dbReference>
<dbReference type="NCBIfam" id="NF002068">
    <property type="entry name" value="PRK00911.1"/>
    <property type="match status" value="1"/>
</dbReference>
<dbReference type="PANTHER" id="PTHR43661">
    <property type="entry name" value="D-XYLONATE DEHYDRATASE"/>
    <property type="match status" value="1"/>
</dbReference>
<dbReference type="PANTHER" id="PTHR43661:SF3">
    <property type="entry name" value="D-XYLONATE DEHYDRATASE YAGF-RELATED"/>
    <property type="match status" value="1"/>
</dbReference>
<dbReference type="Pfam" id="PF24877">
    <property type="entry name" value="ILV_EDD_C"/>
    <property type="match status" value="1"/>
</dbReference>
<dbReference type="Pfam" id="PF00920">
    <property type="entry name" value="ILVD_EDD_N"/>
    <property type="match status" value="1"/>
</dbReference>
<dbReference type="SUPFAM" id="SSF143975">
    <property type="entry name" value="IlvD/EDD N-terminal domain-like"/>
    <property type="match status" value="1"/>
</dbReference>
<dbReference type="SUPFAM" id="SSF52016">
    <property type="entry name" value="LeuD/IlvD-like"/>
    <property type="match status" value="1"/>
</dbReference>
<dbReference type="PROSITE" id="PS00886">
    <property type="entry name" value="ILVD_EDD_1"/>
    <property type="match status" value="1"/>
</dbReference>
<dbReference type="PROSITE" id="PS00887">
    <property type="entry name" value="ILVD_EDD_2"/>
    <property type="match status" value="1"/>
</dbReference>
<evidence type="ECO:0000255" key="1">
    <source>
        <dbReference type="HAMAP-Rule" id="MF_00012"/>
    </source>
</evidence>
<protein>
    <recommendedName>
        <fullName evidence="1">Dihydroxy-acid dehydratase</fullName>
        <shortName evidence="1">DAD</shortName>
        <ecNumber evidence="1">4.2.1.9</ecNumber>
    </recommendedName>
</protein>
<feature type="chain" id="PRO_0000225387" description="Dihydroxy-acid dehydratase">
    <location>
        <begin position="1"/>
        <end position="555"/>
    </location>
</feature>
<feature type="active site" description="Proton acceptor" evidence="1">
    <location>
        <position position="470"/>
    </location>
</feature>
<feature type="binding site" evidence="1">
    <location>
        <position position="78"/>
    </location>
    <ligand>
        <name>Mg(2+)</name>
        <dbReference type="ChEBI" id="CHEBI:18420"/>
    </ligand>
</feature>
<feature type="binding site" evidence="1">
    <location>
        <position position="119"/>
    </location>
    <ligand>
        <name>[2Fe-2S] cluster</name>
        <dbReference type="ChEBI" id="CHEBI:190135"/>
    </ligand>
</feature>
<feature type="binding site" evidence="1">
    <location>
        <position position="120"/>
    </location>
    <ligand>
        <name>Mg(2+)</name>
        <dbReference type="ChEBI" id="CHEBI:18420"/>
    </ligand>
</feature>
<feature type="binding site" description="via carbamate group" evidence="1">
    <location>
        <position position="121"/>
    </location>
    <ligand>
        <name>Mg(2+)</name>
        <dbReference type="ChEBI" id="CHEBI:18420"/>
    </ligand>
</feature>
<feature type="binding site" evidence="1">
    <location>
        <position position="195"/>
    </location>
    <ligand>
        <name>[2Fe-2S] cluster</name>
        <dbReference type="ChEBI" id="CHEBI:190135"/>
    </ligand>
</feature>
<feature type="binding site" evidence="1">
    <location>
        <position position="444"/>
    </location>
    <ligand>
        <name>Mg(2+)</name>
        <dbReference type="ChEBI" id="CHEBI:18420"/>
    </ligand>
</feature>
<feature type="modified residue" description="N6-carboxylysine" evidence="1">
    <location>
        <position position="121"/>
    </location>
</feature>
<reference key="1">
    <citation type="journal article" date="2005" name="Science">
        <title>Genome sequence of the PCE-dechlorinating bacterium Dehalococcoides ethenogenes.</title>
        <authorList>
            <person name="Seshadri R."/>
            <person name="Adrian L."/>
            <person name="Fouts D.E."/>
            <person name="Eisen J.A."/>
            <person name="Phillippy A.M."/>
            <person name="Methe B.A."/>
            <person name="Ward N.L."/>
            <person name="Nelson W.C."/>
            <person name="DeBoy R.T."/>
            <person name="Khouri H.M."/>
            <person name="Kolonay J.F."/>
            <person name="Dodson R.J."/>
            <person name="Daugherty S.C."/>
            <person name="Brinkac L.M."/>
            <person name="Sullivan S.A."/>
            <person name="Madupu R."/>
            <person name="Nelson K.E."/>
            <person name="Kang K.H."/>
            <person name="Impraim M."/>
            <person name="Tran K."/>
            <person name="Robinson J.M."/>
            <person name="Forberger H.A."/>
            <person name="Fraser C.M."/>
            <person name="Zinder S.H."/>
            <person name="Heidelberg J.F."/>
        </authorList>
    </citation>
    <scope>NUCLEOTIDE SEQUENCE [LARGE SCALE GENOMIC DNA]</scope>
    <source>
        <strain>ATCC BAA-2266 / KCTC 15142 / 195</strain>
    </source>
</reference>